<proteinExistence type="inferred from homology"/>
<name>PYRC_ECOL6</name>
<dbReference type="EC" id="3.5.2.3" evidence="2"/>
<dbReference type="EMBL" id="AE014075">
    <property type="protein sequence ID" value="AAN79802.1"/>
    <property type="molecule type" value="Genomic_DNA"/>
</dbReference>
<dbReference type="RefSeq" id="WP_000126520.1">
    <property type="nucleotide sequence ID" value="NZ_CP051263.1"/>
</dbReference>
<dbReference type="SMR" id="Q8FIR2"/>
<dbReference type="STRING" id="199310.c1329"/>
<dbReference type="KEGG" id="ecc:c1329"/>
<dbReference type="eggNOG" id="COG0418">
    <property type="taxonomic scope" value="Bacteria"/>
</dbReference>
<dbReference type="HOGENOM" id="CLU_041558_1_0_6"/>
<dbReference type="BioCyc" id="ECOL199310:C1329-MONOMER"/>
<dbReference type="UniPathway" id="UPA00070">
    <property type="reaction ID" value="UER00117"/>
</dbReference>
<dbReference type="Proteomes" id="UP000001410">
    <property type="component" value="Chromosome"/>
</dbReference>
<dbReference type="GO" id="GO:0005829">
    <property type="term" value="C:cytosol"/>
    <property type="evidence" value="ECO:0007669"/>
    <property type="project" value="TreeGrafter"/>
</dbReference>
<dbReference type="GO" id="GO:0004151">
    <property type="term" value="F:dihydroorotase activity"/>
    <property type="evidence" value="ECO:0007669"/>
    <property type="project" value="UniProtKB-UniRule"/>
</dbReference>
<dbReference type="GO" id="GO:0008270">
    <property type="term" value="F:zinc ion binding"/>
    <property type="evidence" value="ECO:0007669"/>
    <property type="project" value="UniProtKB-UniRule"/>
</dbReference>
<dbReference type="GO" id="GO:0006207">
    <property type="term" value="P:'de novo' pyrimidine nucleobase biosynthetic process"/>
    <property type="evidence" value="ECO:0007669"/>
    <property type="project" value="TreeGrafter"/>
</dbReference>
<dbReference type="GO" id="GO:0044205">
    <property type="term" value="P:'de novo' UMP biosynthetic process"/>
    <property type="evidence" value="ECO:0007669"/>
    <property type="project" value="UniProtKB-UniRule"/>
</dbReference>
<dbReference type="CDD" id="cd01294">
    <property type="entry name" value="DHOase"/>
    <property type="match status" value="1"/>
</dbReference>
<dbReference type="FunFam" id="3.20.20.140:FF:000006">
    <property type="entry name" value="Dihydroorotase"/>
    <property type="match status" value="1"/>
</dbReference>
<dbReference type="Gene3D" id="3.20.20.140">
    <property type="entry name" value="Metal-dependent hydrolases"/>
    <property type="match status" value="1"/>
</dbReference>
<dbReference type="HAMAP" id="MF_00219">
    <property type="entry name" value="PyrC_classII"/>
    <property type="match status" value="1"/>
</dbReference>
<dbReference type="InterPro" id="IPR006680">
    <property type="entry name" value="Amidohydro-rel"/>
</dbReference>
<dbReference type="InterPro" id="IPR004721">
    <property type="entry name" value="DHOdimr"/>
</dbReference>
<dbReference type="InterPro" id="IPR002195">
    <property type="entry name" value="Dihydroorotase_CS"/>
</dbReference>
<dbReference type="InterPro" id="IPR032466">
    <property type="entry name" value="Metal_Hydrolase"/>
</dbReference>
<dbReference type="NCBIfam" id="TIGR00856">
    <property type="entry name" value="pyrC_dimer"/>
    <property type="match status" value="1"/>
</dbReference>
<dbReference type="PANTHER" id="PTHR43137">
    <property type="entry name" value="DIHYDROOROTASE"/>
    <property type="match status" value="1"/>
</dbReference>
<dbReference type="PANTHER" id="PTHR43137:SF1">
    <property type="entry name" value="DIHYDROOROTASE"/>
    <property type="match status" value="1"/>
</dbReference>
<dbReference type="Pfam" id="PF01979">
    <property type="entry name" value="Amidohydro_1"/>
    <property type="match status" value="1"/>
</dbReference>
<dbReference type="PIRSF" id="PIRSF001237">
    <property type="entry name" value="DHOdimr"/>
    <property type="match status" value="1"/>
</dbReference>
<dbReference type="SUPFAM" id="SSF51556">
    <property type="entry name" value="Metallo-dependent hydrolases"/>
    <property type="match status" value="1"/>
</dbReference>
<dbReference type="PROSITE" id="PS00482">
    <property type="entry name" value="DIHYDROOROTASE_1"/>
    <property type="match status" value="1"/>
</dbReference>
<dbReference type="PROSITE" id="PS00483">
    <property type="entry name" value="DIHYDROOROTASE_2"/>
    <property type="match status" value="1"/>
</dbReference>
<comment type="function">
    <text evidence="2">Catalyzes the reversible cyclization of carbamoyl aspartate to dihydroorotate.</text>
</comment>
<comment type="catalytic activity">
    <reaction evidence="2">
        <text>(S)-dihydroorotate + H2O = N-carbamoyl-L-aspartate + H(+)</text>
        <dbReference type="Rhea" id="RHEA:24296"/>
        <dbReference type="ChEBI" id="CHEBI:15377"/>
        <dbReference type="ChEBI" id="CHEBI:15378"/>
        <dbReference type="ChEBI" id="CHEBI:30864"/>
        <dbReference type="ChEBI" id="CHEBI:32814"/>
        <dbReference type="EC" id="3.5.2.3"/>
    </reaction>
</comment>
<comment type="cofactor">
    <cofactor evidence="2">
        <name>Zn(2+)</name>
        <dbReference type="ChEBI" id="CHEBI:29105"/>
    </cofactor>
    <text evidence="2">Binds 2 Zn(2+) ions per subunit.</text>
</comment>
<comment type="pathway">
    <text evidence="2">Pyrimidine metabolism; UMP biosynthesis via de novo pathway; (S)-dihydroorotate from bicarbonate: step 3/3.</text>
</comment>
<comment type="subunit">
    <text evidence="2">Homodimer.</text>
</comment>
<comment type="similarity">
    <text evidence="2">Belongs to the metallo-dependent hydrolases superfamily. DHOase family. Class II DHOase subfamily.</text>
</comment>
<sequence length="348" mass="38760">MTAPSQVLKIRCPDDWHLHLRDGDMLKTVVPYTSEIYGRAIVMPNLAPPVTTVEAAVAYRQRILDAVPAGHDFTPLMTCYLTDSLDPNELERGFNEGVFTAAKLYPANATTNSSHGVTSVDAIMPVLERMEKIGMPLLVHGEVTHADIDIFDREARFIESVMEPLRQRLTALKVVFEHITTKDAADYVRDGNERLAATITPQHLMFNRNHMLVGGVRPHLYCLPILKRNIHQQALRELVASGFNRVFLGTDSAPHARHRKESSCGCAGCFNAPTALGSYATVFEEMNALQHFEAFCSVNGPQFYGLPVNDTFIELVREEQQVAESIALTDDTLVPFLAGETVRWSVKQ</sequence>
<reference key="1">
    <citation type="journal article" date="2002" name="Proc. Natl. Acad. Sci. U.S.A.">
        <title>Extensive mosaic structure revealed by the complete genome sequence of uropathogenic Escherichia coli.</title>
        <authorList>
            <person name="Welch R.A."/>
            <person name="Burland V."/>
            <person name="Plunkett G. III"/>
            <person name="Redford P."/>
            <person name="Roesch P."/>
            <person name="Rasko D."/>
            <person name="Buckles E.L."/>
            <person name="Liou S.-R."/>
            <person name="Boutin A."/>
            <person name="Hackett J."/>
            <person name="Stroud D."/>
            <person name="Mayhew G.F."/>
            <person name="Rose D.J."/>
            <person name="Zhou S."/>
            <person name="Schwartz D.C."/>
            <person name="Perna N.T."/>
            <person name="Mobley H.L.T."/>
            <person name="Donnenberg M.S."/>
            <person name="Blattner F.R."/>
        </authorList>
    </citation>
    <scope>NUCLEOTIDE SEQUENCE [LARGE SCALE GENOMIC DNA]</scope>
    <source>
        <strain>CFT073 / ATCC 700928 / UPEC</strain>
    </source>
</reference>
<accession>Q8FIR2</accession>
<gene>
    <name evidence="2" type="primary">pyrC</name>
    <name type="ordered locus">c1329</name>
</gene>
<evidence type="ECO:0000250" key="1"/>
<evidence type="ECO:0000255" key="2">
    <source>
        <dbReference type="HAMAP-Rule" id="MF_00219"/>
    </source>
</evidence>
<feature type="initiator methionine" description="Removed" evidence="1">
    <location>
        <position position="1"/>
    </location>
</feature>
<feature type="chain" id="PRO_0000147206" description="Dihydroorotase">
    <location>
        <begin position="2"/>
        <end position="348"/>
    </location>
</feature>
<feature type="active site" evidence="2">
    <location>
        <position position="251"/>
    </location>
</feature>
<feature type="binding site" evidence="2">
    <location>
        <position position="17"/>
    </location>
    <ligand>
        <name>Zn(2+)</name>
        <dbReference type="ChEBI" id="CHEBI:29105"/>
        <label>1</label>
    </ligand>
</feature>
<feature type="binding site" evidence="2">
    <location>
        <begin position="19"/>
        <end position="21"/>
    </location>
    <ligand>
        <name>substrate</name>
    </ligand>
</feature>
<feature type="binding site" evidence="2">
    <location>
        <position position="19"/>
    </location>
    <ligand>
        <name>Zn(2+)</name>
        <dbReference type="ChEBI" id="CHEBI:29105"/>
        <label>1</label>
    </ligand>
</feature>
<feature type="binding site" evidence="2">
    <location>
        <position position="45"/>
    </location>
    <ligand>
        <name>substrate</name>
    </ligand>
</feature>
<feature type="binding site" description="via carbamate group" evidence="2">
    <location>
        <position position="103"/>
    </location>
    <ligand>
        <name>Zn(2+)</name>
        <dbReference type="ChEBI" id="CHEBI:29105"/>
        <label>1</label>
    </ligand>
</feature>
<feature type="binding site" description="via carbamate group" evidence="2">
    <location>
        <position position="103"/>
    </location>
    <ligand>
        <name>Zn(2+)</name>
        <dbReference type="ChEBI" id="CHEBI:29105"/>
        <label>2</label>
    </ligand>
</feature>
<feature type="binding site" evidence="2">
    <location>
        <position position="140"/>
    </location>
    <ligand>
        <name>substrate</name>
    </ligand>
</feature>
<feature type="binding site" evidence="2">
    <location>
        <position position="140"/>
    </location>
    <ligand>
        <name>Zn(2+)</name>
        <dbReference type="ChEBI" id="CHEBI:29105"/>
        <label>2</label>
    </ligand>
</feature>
<feature type="binding site" evidence="2">
    <location>
        <position position="178"/>
    </location>
    <ligand>
        <name>Zn(2+)</name>
        <dbReference type="ChEBI" id="CHEBI:29105"/>
        <label>2</label>
    </ligand>
</feature>
<feature type="binding site" evidence="2">
    <location>
        <position position="223"/>
    </location>
    <ligand>
        <name>substrate</name>
    </ligand>
</feature>
<feature type="binding site" evidence="2">
    <location>
        <position position="251"/>
    </location>
    <ligand>
        <name>Zn(2+)</name>
        <dbReference type="ChEBI" id="CHEBI:29105"/>
        <label>1</label>
    </ligand>
</feature>
<feature type="binding site" evidence="2">
    <location>
        <position position="255"/>
    </location>
    <ligand>
        <name>substrate</name>
    </ligand>
</feature>
<feature type="binding site" evidence="2">
    <location>
        <position position="267"/>
    </location>
    <ligand>
        <name>substrate</name>
    </ligand>
</feature>
<feature type="modified residue" description="N6-carboxylysine" evidence="2">
    <location>
        <position position="103"/>
    </location>
</feature>
<protein>
    <recommendedName>
        <fullName evidence="2">Dihydroorotase</fullName>
        <shortName evidence="2">DHOase</shortName>
        <ecNumber evidence="2">3.5.2.3</ecNumber>
    </recommendedName>
</protein>
<organism>
    <name type="scientific">Escherichia coli O6:H1 (strain CFT073 / ATCC 700928 / UPEC)</name>
    <dbReference type="NCBI Taxonomy" id="199310"/>
    <lineage>
        <taxon>Bacteria</taxon>
        <taxon>Pseudomonadati</taxon>
        <taxon>Pseudomonadota</taxon>
        <taxon>Gammaproteobacteria</taxon>
        <taxon>Enterobacterales</taxon>
        <taxon>Enterobacteriaceae</taxon>
        <taxon>Escherichia</taxon>
    </lineage>
</organism>
<keyword id="KW-0378">Hydrolase</keyword>
<keyword id="KW-0479">Metal-binding</keyword>
<keyword id="KW-0665">Pyrimidine biosynthesis</keyword>
<keyword id="KW-1185">Reference proteome</keyword>
<keyword id="KW-0862">Zinc</keyword>